<feature type="chain" id="PRO_0000156002" description="dCTP deaminase">
    <location>
        <begin position="1"/>
        <end position="193"/>
    </location>
</feature>
<feature type="region of interest" description="Disordered" evidence="2">
    <location>
        <begin position="168"/>
        <end position="193"/>
    </location>
</feature>
<feature type="compositionally biased region" description="Basic and acidic residues" evidence="2">
    <location>
        <begin position="170"/>
        <end position="179"/>
    </location>
</feature>
<feature type="active site" description="Proton donor/acceptor" evidence="1">
    <location>
        <position position="138"/>
    </location>
</feature>
<feature type="binding site" evidence="1">
    <location>
        <begin position="110"/>
        <end position="115"/>
    </location>
    <ligand>
        <name>dCTP</name>
        <dbReference type="ChEBI" id="CHEBI:61481"/>
    </ligand>
</feature>
<feature type="binding site" evidence="1">
    <location>
        <position position="128"/>
    </location>
    <ligand>
        <name>dCTP</name>
        <dbReference type="ChEBI" id="CHEBI:61481"/>
    </ligand>
</feature>
<feature type="binding site" evidence="1">
    <location>
        <begin position="136"/>
        <end position="138"/>
    </location>
    <ligand>
        <name>dCTP</name>
        <dbReference type="ChEBI" id="CHEBI:61481"/>
    </ligand>
</feature>
<feature type="binding site" evidence="1">
    <location>
        <position position="171"/>
    </location>
    <ligand>
        <name>dCTP</name>
        <dbReference type="ChEBI" id="CHEBI:61481"/>
    </ligand>
</feature>
<feature type="binding site" evidence="1">
    <location>
        <position position="178"/>
    </location>
    <ligand>
        <name>dCTP</name>
        <dbReference type="ChEBI" id="CHEBI:61481"/>
    </ligand>
</feature>
<feature type="binding site" evidence="1">
    <location>
        <position position="182"/>
    </location>
    <ligand>
        <name>dCTP</name>
        <dbReference type="ChEBI" id="CHEBI:61481"/>
    </ligand>
</feature>
<name>DCD_PHOLL</name>
<proteinExistence type="inferred from homology"/>
<protein>
    <recommendedName>
        <fullName evidence="1">dCTP deaminase</fullName>
        <ecNumber evidence="1">3.5.4.13</ecNumber>
    </recommendedName>
    <alternativeName>
        <fullName evidence="1">Deoxycytidine triphosphate deaminase</fullName>
    </alternativeName>
</protein>
<organism>
    <name type="scientific">Photorhabdus laumondii subsp. laumondii (strain DSM 15139 / CIP 105565 / TT01)</name>
    <name type="common">Photorhabdus luminescens subsp. laumondii</name>
    <dbReference type="NCBI Taxonomy" id="243265"/>
    <lineage>
        <taxon>Bacteria</taxon>
        <taxon>Pseudomonadati</taxon>
        <taxon>Pseudomonadota</taxon>
        <taxon>Gammaproteobacteria</taxon>
        <taxon>Enterobacterales</taxon>
        <taxon>Morganellaceae</taxon>
        <taxon>Photorhabdus</taxon>
    </lineage>
</organism>
<reference key="1">
    <citation type="journal article" date="2003" name="Nat. Biotechnol.">
        <title>The genome sequence of the entomopathogenic bacterium Photorhabdus luminescens.</title>
        <authorList>
            <person name="Duchaud E."/>
            <person name="Rusniok C."/>
            <person name="Frangeul L."/>
            <person name="Buchrieser C."/>
            <person name="Givaudan A."/>
            <person name="Taourit S."/>
            <person name="Bocs S."/>
            <person name="Boursaux-Eude C."/>
            <person name="Chandler M."/>
            <person name="Charles J.-F."/>
            <person name="Dassa E."/>
            <person name="Derose R."/>
            <person name="Derzelle S."/>
            <person name="Freyssinet G."/>
            <person name="Gaudriault S."/>
            <person name="Medigue C."/>
            <person name="Lanois A."/>
            <person name="Powell K."/>
            <person name="Siguier P."/>
            <person name="Vincent R."/>
            <person name="Wingate V."/>
            <person name="Zouine M."/>
            <person name="Glaser P."/>
            <person name="Boemare N."/>
            <person name="Danchin A."/>
            <person name="Kunst F."/>
        </authorList>
    </citation>
    <scope>NUCLEOTIDE SEQUENCE [LARGE SCALE GENOMIC DNA]</scope>
    <source>
        <strain>DSM 15139 / CIP 105565 / TT01</strain>
    </source>
</reference>
<comment type="function">
    <text evidence="1">Catalyzes the deamination of dCTP to dUTP.</text>
</comment>
<comment type="catalytic activity">
    <reaction evidence="1">
        <text>dCTP + H2O + H(+) = dUTP + NH4(+)</text>
        <dbReference type="Rhea" id="RHEA:22680"/>
        <dbReference type="ChEBI" id="CHEBI:15377"/>
        <dbReference type="ChEBI" id="CHEBI:15378"/>
        <dbReference type="ChEBI" id="CHEBI:28938"/>
        <dbReference type="ChEBI" id="CHEBI:61481"/>
        <dbReference type="ChEBI" id="CHEBI:61555"/>
        <dbReference type="EC" id="3.5.4.13"/>
    </reaction>
</comment>
<comment type="pathway">
    <text evidence="1">Pyrimidine metabolism; dUMP biosynthesis; dUMP from dCTP (dUTP route): step 1/2.</text>
</comment>
<comment type="subunit">
    <text evidence="1">Homotrimer.</text>
</comment>
<comment type="similarity">
    <text evidence="1">Belongs to the dCTP deaminase family.</text>
</comment>
<accession>Q7N6J3</accession>
<evidence type="ECO:0000255" key="1">
    <source>
        <dbReference type="HAMAP-Rule" id="MF_00146"/>
    </source>
</evidence>
<evidence type="ECO:0000256" key="2">
    <source>
        <dbReference type="SAM" id="MobiDB-lite"/>
    </source>
</evidence>
<gene>
    <name evidence="1" type="primary">dcd</name>
    <name type="ordered locus">plu1557</name>
</gene>
<keyword id="KW-0378">Hydrolase</keyword>
<keyword id="KW-0546">Nucleotide metabolism</keyword>
<keyword id="KW-0547">Nucleotide-binding</keyword>
<keyword id="KW-1185">Reference proteome</keyword>
<dbReference type="EC" id="3.5.4.13" evidence="1"/>
<dbReference type="EMBL" id="BX571864">
    <property type="protein sequence ID" value="CAE13850.1"/>
    <property type="molecule type" value="Genomic_DNA"/>
</dbReference>
<dbReference type="RefSeq" id="WP_011145854.1">
    <property type="nucleotide sequence ID" value="NC_005126.1"/>
</dbReference>
<dbReference type="SMR" id="Q7N6J3"/>
<dbReference type="STRING" id="243265.plu1557"/>
<dbReference type="GeneID" id="48847844"/>
<dbReference type="KEGG" id="plu:plu1557"/>
<dbReference type="eggNOG" id="COG0717">
    <property type="taxonomic scope" value="Bacteria"/>
</dbReference>
<dbReference type="HOGENOM" id="CLU_087476_2_0_6"/>
<dbReference type="OrthoDB" id="9780956at2"/>
<dbReference type="UniPathway" id="UPA00610">
    <property type="reaction ID" value="UER00665"/>
</dbReference>
<dbReference type="Proteomes" id="UP000002514">
    <property type="component" value="Chromosome"/>
</dbReference>
<dbReference type="GO" id="GO:0008829">
    <property type="term" value="F:dCTP deaminase activity"/>
    <property type="evidence" value="ECO:0007669"/>
    <property type="project" value="UniProtKB-UniRule"/>
</dbReference>
<dbReference type="GO" id="GO:0000166">
    <property type="term" value="F:nucleotide binding"/>
    <property type="evidence" value="ECO:0007669"/>
    <property type="project" value="UniProtKB-KW"/>
</dbReference>
<dbReference type="GO" id="GO:0006226">
    <property type="term" value="P:dUMP biosynthetic process"/>
    <property type="evidence" value="ECO:0007669"/>
    <property type="project" value="UniProtKB-UniPathway"/>
</dbReference>
<dbReference type="GO" id="GO:0006229">
    <property type="term" value="P:dUTP biosynthetic process"/>
    <property type="evidence" value="ECO:0007669"/>
    <property type="project" value="UniProtKB-UniRule"/>
</dbReference>
<dbReference type="GO" id="GO:0015949">
    <property type="term" value="P:nucleobase-containing small molecule interconversion"/>
    <property type="evidence" value="ECO:0007669"/>
    <property type="project" value="TreeGrafter"/>
</dbReference>
<dbReference type="CDD" id="cd07557">
    <property type="entry name" value="trimeric_dUTPase"/>
    <property type="match status" value="1"/>
</dbReference>
<dbReference type="FunFam" id="2.70.40.10:FF:000003">
    <property type="entry name" value="dCTP deaminase"/>
    <property type="match status" value="1"/>
</dbReference>
<dbReference type="Gene3D" id="2.70.40.10">
    <property type="match status" value="1"/>
</dbReference>
<dbReference type="HAMAP" id="MF_00146">
    <property type="entry name" value="dCTP_deaminase"/>
    <property type="match status" value="1"/>
</dbReference>
<dbReference type="InterPro" id="IPR011962">
    <property type="entry name" value="dCTP_deaminase"/>
</dbReference>
<dbReference type="InterPro" id="IPR036157">
    <property type="entry name" value="dUTPase-like_sf"/>
</dbReference>
<dbReference type="InterPro" id="IPR033704">
    <property type="entry name" value="dUTPase_trimeric"/>
</dbReference>
<dbReference type="NCBIfam" id="TIGR02274">
    <property type="entry name" value="dCTP_deam"/>
    <property type="match status" value="1"/>
</dbReference>
<dbReference type="PANTHER" id="PTHR42680">
    <property type="entry name" value="DCTP DEAMINASE"/>
    <property type="match status" value="1"/>
</dbReference>
<dbReference type="PANTHER" id="PTHR42680:SF3">
    <property type="entry name" value="DCTP DEAMINASE"/>
    <property type="match status" value="1"/>
</dbReference>
<dbReference type="Pfam" id="PF22769">
    <property type="entry name" value="DCD"/>
    <property type="match status" value="1"/>
</dbReference>
<dbReference type="SUPFAM" id="SSF51283">
    <property type="entry name" value="dUTPase-like"/>
    <property type="match status" value="1"/>
</dbReference>
<sequence>MRLCDRDIIKWLDEGKLVIAPRPPIERINGATADVRLGNQFRVFCGHTAAYIDLSGPKDEVSAALDRVMSDEIILPDDEVFFLHPGELALAVTLESVTLPDDLVGWLDGRSSLARLGLMVHVTAHRIDPGWHGQIVLEFYNSGKLPLALRPGMVIGALSFEPLSGSADRPYNRRQDAKYKNQQGAVSSRIDED</sequence>